<dbReference type="EMBL" id="U18466">
    <property type="protein sequence ID" value="AAA65355.1"/>
    <property type="molecule type" value="Genomic_DNA"/>
</dbReference>
<dbReference type="RefSeq" id="NP_042819.1">
    <property type="nucleotide sequence ID" value="NC_001659.2"/>
</dbReference>
<dbReference type="SMR" id="Q65195"/>
<dbReference type="GeneID" id="22220343"/>
<dbReference type="KEGG" id="vg:22220343"/>
<dbReference type="Proteomes" id="UP000000624">
    <property type="component" value="Segment"/>
</dbReference>
<dbReference type="GO" id="GO:0044423">
    <property type="term" value="C:virion component"/>
    <property type="evidence" value="ECO:0007669"/>
    <property type="project" value="UniProtKB-KW"/>
</dbReference>
<protein>
    <recommendedName>
        <fullName>Uncharacterized protein E423R</fullName>
        <shortName>pE423R</shortName>
    </recommendedName>
</protein>
<reference key="1">
    <citation type="journal article" date="1995" name="Virology">
        <title>Analysis of the complete nucleotide sequence of African swine fever virus.</title>
        <authorList>
            <person name="Yanez R.J."/>
            <person name="Rodriguez J.M."/>
            <person name="Nogal M.L."/>
            <person name="Yuste L."/>
            <person name="Enriquez C."/>
            <person name="Rodriguez J.F."/>
            <person name="Vinuela E."/>
        </authorList>
    </citation>
    <scope>NUCLEOTIDE SEQUENCE [LARGE SCALE GENOMIC DNA]</scope>
</reference>
<reference key="2">
    <citation type="journal article" date="2018" name="J. Virol.">
        <title>A Proteomic Atlas of the African Swine Fever Virus Particle.</title>
        <authorList>
            <person name="Alejo A."/>
            <person name="Matamoros T."/>
            <person name="Guerra M."/>
            <person name="Andres G."/>
        </authorList>
    </citation>
    <scope>SUBCELLULAR LOCATION</scope>
</reference>
<reference key="3">
    <citation type="journal article" date="2020" name="J. Virol.">
        <title>The African Swine Fever Virus Transcriptome.</title>
        <authorList>
            <person name="Cackett G."/>
            <person name="Matelska D."/>
            <person name="Sykora M."/>
            <person name="Portugal R."/>
            <person name="Malecki M."/>
            <person name="Baehler J."/>
            <person name="Dixon L."/>
            <person name="Werner F."/>
        </authorList>
    </citation>
    <scope>INDUCTION</scope>
</reference>
<gene>
    <name type="ordered locus">Ba71V-127</name>
    <name type="ORF">E423R</name>
</gene>
<organismHost>
    <name type="scientific">Ornithodoros</name>
    <name type="common">relapsing fever ticks</name>
    <dbReference type="NCBI Taxonomy" id="6937"/>
</organismHost>
<organismHost>
    <name type="scientific">Sus scrofa</name>
    <name type="common">Pig</name>
    <dbReference type="NCBI Taxonomy" id="9823"/>
</organismHost>
<sequence length="423" mass="48088">MLWRNEITEFMDQLSKYSQEILKTFKQLRPSEYKQYNEFLTQVTPLLQKTSEKIPELVDHIFNYLDNVEKICELLVNASSIIISSKIREQVKHGMSFSYKADLDSLADILSQKQYVLMHLSKNIAAEYFNTCLNQGKSKLDLKAASVFYSSRPRTASSAELYRKMLYAYGSPQEINYYTEKARNKTLDVEESDSMAIIERTARHNLSLMHPLEAMGLTFGATNTDADPEDLKDKTVINLTLPQATESITYHLKSLMQLKKVSTASGLNTNILKAFDNIISTPVKKNKMASKLAPGMDVVFTSDNGKTFFTKNILSKNMLAGPKERVFAYNNLISNLNNSCFIQNHNDFLRQQDSWPFYDAHNFTNKFLMQPIFSGQTRPRLQGAMEAAHVETHLTAFLQSIQPSRPQDPSVLASPKLSALILN</sequence>
<accession>Q65195</accession>
<organism>
    <name type="scientific">African swine fever virus (strain Badajoz 1971 Vero-adapted)</name>
    <name type="common">Ba71V</name>
    <name type="synonym">ASFV</name>
    <dbReference type="NCBI Taxonomy" id="10498"/>
    <lineage>
        <taxon>Viruses</taxon>
        <taxon>Varidnaviria</taxon>
        <taxon>Bamfordvirae</taxon>
        <taxon>Nucleocytoviricota</taxon>
        <taxon>Pokkesviricetes</taxon>
        <taxon>Asfuvirales</taxon>
        <taxon>Asfarviridae</taxon>
        <taxon>Asfivirus</taxon>
        <taxon>African swine fever virus</taxon>
    </lineage>
</organism>
<keyword id="KW-0426">Late protein</keyword>
<keyword id="KW-1185">Reference proteome</keyword>
<keyword id="KW-0946">Virion</keyword>
<evidence type="ECO:0000269" key="1">
    <source>
    </source>
</evidence>
<evidence type="ECO:0000269" key="2">
    <source>
    </source>
</evidence>
<evidence type="ECO:0000305" key="3"/>
<name>VF423_ASFB7</name>
<proteinExistence type="evidence at transcript level"/>
<comment type="subcellular location">
    <subcellularLocation>
        <location evidence="1">Virion</location>
    </subcellularLocation>
</comment>
<comment type="induction">
    <text evidence="2">Expressed in the late phase of the viral replicative cycle.</text>
</comment>
<comment type="similarity">
    <text evidence="3">Belongs to the asfivirus E423R family.</text>
</comment>
<feature type="chain" id="PRO_0000373685" description="Uncharacterized protein E423R">
    <location>
        <begin position="1"/>
        <end position="423"/>
    </location>
</feature>